<organism>
    <name type="scientific">Shewanella sp. (strain ANA-3)</name>
    <dbReference type="NCBI Taxonomy" id="94122"/>
    <lineage>
        <taxon>Bacteria</taxon>
        <taxon>Pseudomonadati</taxon>
        <taxon>Pseudomonadota</taxon>
        <taxon>Gammaproteobacteria</taxon>
        <taxon>Alteromonadales</taxon>
        <taxon>Shewanellaceae</taxon>
        <taxon>Shewanella</taxon>
    </lineage>
</organism>
<gene>
    <name evidence="1" type="primary">panB</name>
    <name type="ordered locus">Shewana3_3408</name>
</gene>
<proteinExistence type="inferred from homology"/>
<reference key="1">
    <citation type="submission" date="2006-09" db="EMBL/GenBank/DDBJ databases">
        <title>Complete sequence of chromosome 1 of Shewanella sp. ANA-3.</title>
        <authorList>
            <person name="Copeland A."/>
            <person name="Lucas S."/>
            <person name="Lapidus A."/>
            <person name="Barry K."/>
            <person name="Detter J.C."/>
            <person name="Glavina del Rio T."/>
            <person name="Hammon N."/>
            <person name="Israni S."/>
            <person name="Dalin E."/>
            <person name="Tice H."/>
            <person name="Pitluck S."/>
            <person name="Chertkov O."/>
            <person name="Brettin T."/>
            <person name="Bruce D."/>
            <person name="Han C."/>
            <person name="Tapia R."/>
            <person name="Gilna P."/>
            <person name="Schmutz J."/>
            <person name="Larimer F."/>
            <person name="Land M."/>
            <person name="Hauser L."/>
            <person name="Kyrpides N."/>
            <person name="Kim E."/>
            <person name="Newman D."/>
            <person name="Salticov C."/>
            <person name="Konstantinidis K."/>
            <person name="Klappenback J."/>
            <person name="Tiedje J."/>
            <person name="Richardson P."/>
        </authorList>
    </citation>
    <scope>NUCLEOTIDE SEQUENCE [LARGE SCALE GENOMIC DNA]</scope>
    <source>
        <strain>ANA-3</strain>
    </source>
</reference>
<name>PANB_SHESA</name>
<evidence type="ECO:0000255" key="1">
    <source>
        <dbReference type="HAMAP-Rule" id="MF_00156"/>
    </source>
</evidence>
<dbReference type="EC" id="2.1.2.11" evidence="1"/>
<dbReference type="EMBL" id="CP000469">
    <property type="protein sequence ID" value="ABK49631.1"/>
    <property type="molecule type" value="Genomic_DNA"/>
</dbReference>
<dbReference type="RefSeq" id="WP_011718202.1">
    <property type="nucleotide sequence ID" value="NC_008577.1"/>
</dbReference>
<dbReference type="SMR" id="A0L0R2"/>
<dbReference type="STRING" id="94122.Shewana3_3408"/>
<dbReference type="KEGG" id="shn:Shewana3_3408"/>
<dbReference type="eggNOG" id="COG0413">
    <property type="taxonomic scope" value="Bacteria"/>
</dbReference>
<dbReference type="HOGENOM" id="CLU_036645_1_0_6"/>
<dbReference type="OrthoDB" id="9781789at2"/>
<dbReference type="UniPathway" id="UPA00028">
    <property type="reaction ID" value="UER00003"/>
</dbReference>
<dbReference type="Proteomes" id="UP000002589">
    <property type="component" value="Chromosome"/>
</dbReference>
<dbReference type="GO" id="GO:0005737">
    <property type="term" value="C:cytoplasm"/>
    <property type="evidence" value="ECO:0007669"/>
    <property type="project" value="UniProtKB-SubCell"/>
</dbReference>
<dbReference type="GO" id="GO:0003864">
    <property type="term" value="F:3-methyl-2-oxobutanoate hydroxymethyltransferase activity"/>
    <property type="evidence" value="ECO:0007669"/>
    <property type="project" value="UniProtKB-UniRule"/>
</dbReference>
<dbReference type="GO" id="GO:0000287">
    <property type="term" value="F:magnesium ion binding"/>
    <property type="evidence" value="ECO:0007669"/>
    <property type="project" value="TreeGrafter"/>
</dbReference>
<dbReference type="GO" id="GO:0015940">
    <property type="term" value="P:pantothenate biosynthetic process"/>
    <property type="evidence" value="ECO:0007669"/>
    <property type="project" value="UniProtKB-UniRule"/>
</dbReference>
<dbReference type="CDD" id="cd06557">
    <property type="entry name" value="KPHMT-like"/>
    <property type="match status" value="1"/>
</dbReference>
<dbReference type="FunFam" id="3.20.20.60:FF:000003">
    <property type="entry name" value="3-methyl-2-oxobutanoate hydroxymethyltransferase"/>
    <property type="match status" value="1"/>
</dbReference>
<dbReference type="Gene3D" id="3.20.20.60">
    <property type="entry name" value="Phosphoenolpyruvate-binding domains"/>
    <property type="match status" value="1"/>
</dbReference>
<dbReference type="HAMAP" id="MF_00156">
    <property type="entry name" value="PanB"/>
    <property type="match status" value="1"/>
</dbReference>
<dbReference type="InterPro" id="IPR003700">
    <property type="entry name" value="Pantoate_hydroxy_MeTrfase"/>
</dbReference>
<dbReference type="InterPro" id="IPR015813">
    <property type="entry name" value="Pyrv/PenolPyrv_kinase-like_dom"/>
</dbReference>
<dbReference type="InterPro" id="IPR040442">
    <property type="entry name" value="Pyrv_kinase-like_dom_sf"/>
</dbReference>
<dbReference type="NCBIfam" id="TIGR00222">
    <property type="entry name" value="panB"/>
    <property type="match status" value="1"/>
</dbReference>
<dbReference type="NCBIfam" id="NF001452">
    <property type="entry name" value="PRK00311.1"/>
    <property type="match status" value="1"/>
</dbReference>
<dbReference type="PANTHER" id="PTHR20881">
    <property type="entry name" value="3-METHYL-2-OXOBUTANOATE HYDROXYMETHYLTRANSFERASE"/>
    <property type="match status" value="1"/>
</dbReference>
<dbReference type="PANTHER" id="PTHR20881:SF0">
    <property type="entry name" value="3-METHYL-2-OXOBUTANOATE HYDROXYMETHYLTRANSFERASE"/>
    <property type="match status" value="1"/>
</dbReference>
<dbReference type="Pfam" id="PF02548">
    <property type="entry name" value="Pantoate_transf"/>
    <property type="match status" value="1"/>
</dbReference>
<dbReference type="PIRSF" id="PIRSF000388">
    <property type="entry name" value="Pantoate_hydroxy_MeTrfase"/>
    <property type="match status" value="1"/>
</dbReference>
<dbReference type="SUPFAM" id="SSF51621">
    <property type="entry name" value="Phosphoenolpyruvate/pyruvate domain"/>
    <property type="match status" value="1"/>
</dbReference>
<keyword id="KW-0963">Cytoplasm</keyword>
<keyword id="KW-0460">Magnesium</keyword>
<keyword id="KW-0479">Metal-binding</keyword>
<keyword id="KW-0566">Pantothenate biosynthesis</keyword>
<keyword id="KW-0808">Transferase</keyword>
<protein>
    <recommendedName>
        <fullName evidence="1">3-methyl-2-oxobutanoate hydroxymethyltransferase</fullName>
        <ecNumber evidence="1">2.1.2.11</ecNumber>
    </recommendedName>
    <alternativeName>
        <fullName evidence="1">Ketopantoate hydroxymethyltransferase</fullName>
        <shortName evidence="1">KPHMT</shortName>
    </alternativeName>
</protein>
<sequence length="264" mass="28201">MSKVTSSTLLKYKQEGRKFTALTAYDASFASAFDGEGIDVLLVGDSLGMVLQGHDDTLPVTTAEIAYHTRCVRRGIERSLLIADMPFMSYATPEQAMENATALMQAGANMVKLEGGHWLLETVTKLTERGIPVCAHLGLTPQSVHVFGGFKVQGRDAENAQRILDEAKALEAAGAQLLVVECIPASLATAITQALTIPVIGIGAGATTDGQILVMHDVLGISSGYIPRFSKNYLKQTGEIRSAVRAYIEEVANGSFPSADHTFN</sequence>
<accession>A0L0R2</accession>
<comment type="function">
    <text evidence="1">Catalyzes the reversible reaction in which hydroxymethyl group from 5,10-methylenetetrahydrofolate is transferred onto alpha-ketoisovalerate to form ketopantoate.</text>
</comment>
<comment type="catalytic activity">
    <reaction evidence="1">
        <text>3-methyl-2-oxobutanoate + (6R)-5,10-methylene-5,6,7,8-tetrahydrofolate + H2O = 2-dehydropantoate + (6S)-5,6,7,8-tetrahydrofolate</text>
        <dbReference type="Rhea" id="RHEA:11824"/>
        <dbReference type="ChEBI" id="CHEBI:11561"/>
        <dbReference type="ChEBI" id="CHEBI:11851"/>
        <dbReference type="ChEBI" id="CHEBI:15377"/>
        <dbReference type="ChEBI" id="CHEBI:15636"/>
        <dbReference type="ChEBI" id="CHEBI:57453"/>
        <dbReference type="EC" id="2.1.2.11"/>
    </reaction>
</comment>
<comment type="cofactor">
    <cofactor evidence="1">
        <name>Mg(2+)</name>
        <dbReference type="ChEBI" id="CHEBI:18420"/>
    </cofactor>
    <text evidence="1">Binds 1 Mg(2+) ion per subunit.</text>
</comment>
<comment type="pathway">
    <text evidence="1">Cofactor biosynthesis; (R)-pantothenate biosynthesis; (R)-pantoate from 3-methyl-2-oxobutanoate: step 1/2.</text>
</comment>
<comment type="subunit">
    <text evidence="1">Homodecamer; pentamer of dimers.</text>
</comment>
<comment type="subcellular location">
    <subcellularLocation>
        <location evidence="1">Cytoplasm</location>
    </subcellularLocation>
</comment>
<comment type="similarity">
    <text evidence="1">Belongs to the PanB family.</text>
</comment>
<feature type="chain" id="PRO_0000297371" description="3-methyl-2-oxobutanoate hydroxymethyltransferase">
    <location>
        <begin position="1"/>
        <end position="264"/>
    </location>
</feature>
<feature type="active site" description="Proton acceptor" evidence="1">
    <location>
        <position position="181"/>
    </location>
</feature>
<feature type="binding site" evidence="1">
    <location>
        <begin position="45"/>
        <end position="46"/>
    </location>
    <ligand>
        <name>3-methyl-2-oxobutanoate</name>
        <dbReference type="ChEBI" id="CHEBI:11851"/>
    </ligand>
</feature>
<feature type="binding site" evidence="1">
    <location>
        <position position="45"/>
    </location>
    <ligand>
        <name>Mg(2+)</name>
        <dbReference type="ChEBI" id="CHEBI:18420"/>
    </ligand>
</feature>
<feature type="binding site" evidence="1">
    <location>
        <position position="84"/>
    </location>
    <ligand>
        <name>3-methyl-2-oxobutanoate</name>
        <dbReference type="ChEBI" id="CHEBI:11851"/>
    </ligand>
</feature>
<feature type="binding site" evidence="1">
    <location>
        <position position="84"/>
    </location>
    <ligand>
        <name>Mg(2+)</name>
        <dbReference type="ChEBI" id="CHEBI:18420"/>
    </ligand>
</feature>
<feature type="binding site" evidence="1">
    <location>
        <position position="112"/>
    </location>
    <ligand>
        <name>3-methyl-2-oxobutanoate</name>
        <dbReference type="ChEBI" id="CHEBI:11851"/>
    </ligand>
</feature>
<feature type="binding site" evidence="1">
    <location>
        <position position="114"/>
    </location>
    <ligand>
        <name>Mg(2+)</name>
        <dbReference type="ChEBI" id="CHEBI:18420"/>
    </ligand>
</feature>